<feature type="chain" id="PRO_0000143019" description="Probable porphobilinogen deaminase">
    <location>
        <begin position="1"/>
        <end position="241"/>
    </location>
</feature>
<evidence type="ECO:0000250" key="1"/>
<evidence type="ECO:0000305" key="2"/>
<sequence>MLSAYYNDPFLADFCLGNIPLRLASRQSSLAVLQAHECLRKLQIFFPRLWGQIITTTTQGDLDQETPLCAVENTGFFTDDVDFLVQSGQCDLGIHSAKDLPENPKATVVSITASIDPRDILVFHEKYLSIPLPRRLRIGSSSVRRKELLSLLYPSAIITDIRGTIQTRLKLLEEKNFDAIVMANAAVSRLGLRLPCTKILPPPYHPLQGRLAITASRHIRSWRGLFLTCGITEDVEIMCFS</sequence>
<reference key="1">
    <citation type="journal article" date="1998" name="Science">
        <title>Genome sequence of an obligate intracellular pathogen of humans: Chlamydia trachomatis.</title>
        <authorList>
            <person name="Stephens R.S."/>
            <person name="Kalman S."/>
            <person name="Lammel C.J."/>
            <person name="Fan J."/>
            <person name="Marathe R."/>
            <person name="Aravind L."/>
            <person name="Mitchell W.P."/>
            <person name="Olinger L."/>
            <person name="Tatusov R.L."/>
            <person name="Zhao Q."/>
            <person name="Koonin E.V."/>
            <person name="Davis R.W."/>
        </authorList>
    </citation>
    <scope>NUCLEOTIDE SEQUENCE [LARGE SCALE GENOMIC DNA]</scope>
    <source>
        <strain>ATCC VR-885 / DSM 19411 / UW-3/Cx</strain>
    </source>
</reference>
<accession>O84301</accession>
<gene>
    <name type="primary">hemC</name>
    <name type="ordered locus">CT_299</name>
</gene>
<protein>
    <recommendedName>
        <fullName>Probable porphobilinogen deaminase</fullName>
        <shortName>PBG</shortName>
        <ecNumber>2.5.1.61</ecNumber>
    </recommendedName>
    <alternativeName>
        <fullName>Hydroxymethylbilane synthase</fullName>
        <shortName>HMBS</shortName>
    </alternativeName>
    <alternativeName>
        <fullName>Pre-uroporphyrinogen synthase</fullName>
    </alternativeName>
</protein>
<name>HEM3_CHLTR</name>
<comment type="function">
    <text evidence="1">Tetrapolymerization of the monopyrrole PBG into the hydroxymethylbilane pre-uroporphyrinogen in several discrete steps.</text>
</comment>
<comment type="catalytic activity">
    <reaction>
        <text>4 porphobilinogen + H2O = hydroxymethylbilane + 4 NH4(+)</text>
        <dbReference type="Rhea" id="RHEA:13185"/>
        <dbReference type="ChEBI" id="CHEBI:15377"/>
        <dbReference type="ChEBI" id="CHEBI:28938"/>
        <dbReference type="ChEBI" id="CHEBI:57845"/>
        <dbReference type="ChEBI" id="CHEBI:58126"/>
        <dbReference type="EC" id="2.5.1.61"/>
    </reaction>
</comment>
<comment type="pathway">
    <text>Porphyrin-containing compound metabolism; protoporphyrin-IX biosynthesis; coproporphyrinogen-III from 5-aminolevulinate: step 2/4.</text>
</comment>
<comment type="similarity">
    <text evidence="2">Belongs to the HMBS family.</text>
</comment>
<comment type="caution">
    <text evidence="2">This sequence may not function as a hydroxymethylbilane synthase because it lacks the cysteine residue necessary for attachment of the dipyrromethane cofactor.</text>
</comment>
<proteinExistence type="inferred from homology"/>
<organism>
    <name type="scientific">Chlamydia trachomatis serovar D (strain ATCC VR-885 / DSM 19411 / UW-3/Cx)</name>
    <dbReference type="NCBI Taxonomy" id="272561"/>
    <lineage>
        <taxon>Bacteria</taxon>
        <taxon>Pseudomonadati</taxon>
        <taxon>Chlamydiota</taxon>
        <taxon>Chlamydiia</taxon>
        <taxon>Chlamydiales</taxon>
        <taxon>Chlamydiaceae</taxon>
        <taxon>Chlamydia/Chlamydophila group</taxon>
        <taxon>Chlamydia</taxon>
    </lineage>
</organism>
<dbReference type="EC" id="2.5.1.61"/>
<dbReference type="EMBL" id="AE001273">
    <property type="protein sequence ID" value="AAC67892.1"/>
    <property type="molecule type" value="Genomic_DNA"/>
</dbReference>
<dbReference type="PIR" id="E71532">
    <property type="entry name" value="E71532"/>
</dbReference>
<dbReference type="RefSeq" id="NP_219804.1">
    <property type="nucleotide sequence ID" value="NC_000117.1"/>
</dbReference>
<dbReference type="RefSeq" id="WP_009871647.1">
    <property type="nucleotide sequence ID" value="NC_000117.1"/>
</dbReference>
<dbReference type="SMR" id="O84301"/>
<dbReference type="FunCoup" id="O84301">
    <property type="interactions" value="261"/>
</dbReference>
<dbReference type="STRING" id="272561.CT_299"/>
<dbReference type="EnsemblBacteria" id="AAC67892">
    <property type="protein sequence ID" value="AAC67892"/>
    <property type="gene ID" value="CT_299"/>
</dbReference>
<dbReference type="GeneID" id="884823"/>
<dbReference type="KEGG" id="ctr:CT_299"/>
<dbReference type="PATRIC" id="fig|272561.5.peg.321"/>
<dbReference type="HOGENOM" id="CLU_019704_2_0_0"/>
<dbReference type="InParanoid" id="O84301"/>
<dbReference type="OrthoDB" id="17762at2"/>
<dbReference type="UniPathway" id="UPA00251">
    <property type="reaction ID" value="UER00319"/>
</dbReference>
<dbReference type="Proteomes" id="UP000000431">
    <property type="component" value="Chromosome"/>
</dbReference>
<dbReference type="GO" id="GO:0005737">
    <property type="term" value="C:cytoplasm"/>
    <property type="evidence" value="ECO:0000318"/>
    <property type="project" value="GO_Central"/>
</dbReference>
<dbReference type="GO" id="GO:0004418">
    <property type="term" value="F:hydroxymethylbilane synthase activity"/>
    <property type="evidence" value="ECO:0000318"/>
    <property type="project" value="GO_Central"/>
</dbReference>
<dbReference type="GO" id="GO:0006783">
    <property type="term" value="P:heme biosynthetic process"/>
    <property type="evidence" value="ECO:0000318"/>
    <property type="project" value="GO_Central"/>
</dbReference>
<dbReference type="GO" id="GO:0006782">
    <property type="term" value="P:protoporphyrinogen IX biosynthetic process"/>
    <property type="evidence" value="ECO:0007669"/>
    <property type="project" value="UniProtKB-UniPathway"/>
</dbReference>
<dbReference type="Gene3D" id="3.40.190.10">
    <property type="entry name" value="Periplasmic binding protein-like II"/>
    <property type="match status" value="2"/>
</dbReference>
<dbReference type="InterPro" id="IPR000860">
    <property type="entry name" value="HemC"/>
</dbReference>
<dbReference type="InterPro" id="IPR022417">
    <property type="entry name" value="Porphobilin_deaminase_N"/>
</dbReference>
<dbReference type="NCBIfam" id="NF002202">
    <property type="entry name" value="PRK01066.1"/>
    <property type="match status" value="1"/>
</dbReference>
<dbReference type="PANTHER" id="PTHR11557">
    <property type="entry name" value="PORPHOBILINOGEN DEAMINASE"/>
    <property type="match status" value="1"/>
</dbReference>
<dbReference type="PANTHER" id="PTHR11557:SF0">
    <property type="entry name" value="PORPHOBILINOGEN DEAMINASE"/>
    <property type="match status" value="1"/>
</dbReference>
<dbReference type="Pfam" id="PF01379">
    <property type="entry name" value="Porphobil_deam"/>
    <property type="match status" value="1"/>
</dbReference>
<dbReference type="PRINTS" id="PR00151">
    <property type="entry name" value="PORPHBDMNASE"/>
</dbReference>
<dbReference type="SUPFAM" id="SSF53850">
    <property type="entry name" value="Periplasmic binding protein-like II"/>
    <property type="match status" value="1"/>
</dbReference>
<keyword id="KW-0627">Porphyrin biosynthesis</keyword>
<keyword id="KW-1185">Reference proteome</keyword>
<keyword id="KW-0808">Transferase</keyword>